<accession>A1SNF6</accession>
<comment type="function">
    <text evidence="1">Catalyzes the transfer of a dimethylallyl group onto the adenine at position 37 in tRNAs that read codons beginning with uridine, leading to the formation of N6-(dimethylallyl)adenosine (i(6)A).</text>
</comment>
<comment type="catalytic activity">
    <reaction evidence="1">
        <text>adenosine(37) in tRNA + dimethylallyl diphosphate = N(6)-dimethylallyladenosine(37) in tRNA + diphosphate</text>
        <dbReference type="Rhea" id="RHEA:26482"/>
        <dbReference type="Rhea" id="RHEA-COMP:10162"/>
        <dbReference type="Rhea" id="RHEA-COMP:10375"/>
        <dbReference type="ChEBI" id="CHEBI:33019"/>
        <dbReference type="ChEBI" id="CHEBI:57623"/>
        <dbReference type="ChEBI" id="CHEBI:74411"/>
        <dbReference type="ChEBI" id="CHEBI:74415"/>
        <dbReference type="EC" id="2.5.1.75"/>
    </reaction>
</comment>
<comment type="cofactor">
    <cofactor evidence="1">
        <name>Mg(2+)</name>
        <dbReference type="ChEBI" id="CHEBI:18420"/>
    </cofactor>
</comment>
<comment type="subunit">
    <text evidence="1">Monomer.</text>
</comment>
<comment type="similarity">
    <text evidence="1">Belongs to the IPP transferase family.</text>
</comment>
<organism>
    <name type="scientific">Nocardioides sp. (strain ATCC BAA-499 / JS614)</name>
    <dbReference type="NCBI Taxonomy" id="196162"/>
    <lineage>
        <taxon>Bacteria</taxon>
        <taxon>Bacillati</taxon>
        <taxon>Actinomycetota</taxon>
        <taxon>Actinomycetes</taxon>
        <taxon>Propionibacteriales</taxon>
        <taxon>Nocardioidaceae</taxon>
        <taxon>Nocardioides</taxon>
    </lineage>
</organism>
<keyword id="KW-0067">ATP-binding</keyword>
<keyword id="KW-0460">Magnesium</keyword>
<keyword id="KW-0547">Nucleotide-binding</keyword>
<keyword id="KW-1185">Reference proteome</keyword>
<keyword id="KW-0808">Transferase</keyword>
<keyword id="KW-0819">tRNA processing</keyword>
<dbReference type="EC" id="2.5.1.75" evidence="1"/>
<dbReference type="EMBL" id="CP000509">
    <property type="protein sequence ID" value="ABL83341.1"/>
    <property type="molecule type" value="Genomic_DNA"/>
</dbReference>
<dbReference type="RefSeq" id="WP_011757272.1">
    <property type="nucleotide sequence ID" value="NC_008699.1"/>
</dbReference>
<dbReference type="SMR" id="A1SNF6"/>
<dbReference type="STRING" id="196162.Noca_3843"/>
<dbReference type="KEGG" id="nca:Noca_3843"/>
<dbReference type="eggNOG" id="COG0324">
    <property type="taxonomic scope" value="Bacteria"/>
</dbReference>
<dbReference type="HOGENOM" id="CLU_032616_0_1_11"/>
<dbReference type="OrthoDB" id="9776390at2"/>
<dbReference type="Proteomes" id="UP000000640">
    <property type="component" value="Chromosome"/>
</dbReference>
<dbReference type="GO" id="GO:0005524">
    <property type="term" value="F:ATP binding"/>
    <property type="evidence" value="ECO:0007669"/>
    <property type="project" value="UniProtKB-UniRule"/>
</dbReference>
<dbReference type="GO" id="GO:0052381">
    <property type="term" value="F:tRNA dimethylallyltransferase activity"/>
    <property type="evidence" value="ECO:0007669"/>
    <property type="project" value="UniProtKB-UniRule"/>
</dbReference>
<dbReference type="GO" id="GO:0006400">
    <property type="term" value="P:tRNA modification"/>
    <property type="evidence" value="ECO:0007669"/>
    <property type="project" value="TreeGrafter"/>
</dbReference>
<dbReference type="FunFam" id="1.10.20.140:FF:000001">
    <property type="entry name" value="tRNA dimethylallyltransferase"/>
    <property type="match status" value="1"/>
</dbReference>
<dbReference type="Gene3D" id="1.10.20.140">
    <property type="match status" value="1"/>
</dbReference>
<dbReference type="Gene3D" id="3.40.50.300">
    <property type="entry name" value="P-loop containing nucleotide triphosphate hydrolases"/>
    <property type="match status" value="1"/>
</dbReference>
<dbReference type="HAMAP" id="MF_00185">
    <property type="entry name" value="IPP_trans"/>
    <property type="match status" value="1"/>
</dbReference>
<dbReference type="InterPro" id="IPR039657">
    <property type="entry name" value="Dimethylallyltransferase"/>
</dbReference>
<dbReference type="InterPro" id="IPR018022">
    <property type="entry name" value="IPT"/>
</dbReference>
<dbReference type="InterPro" id="IPR027417">
    <property type="entry name" value="P-loop_NTPase"/>
</dbReference>
<dbReference type="NCBIfam" id="TIGR00174">
    <property type="entry name" value="miaA"/>
    <property type="match status" value="1"/>
</dbReference>
<dbReference type="PANTHER" id="PTHR11088">
    <property type="entry name" value="TRNA DIMETHYLALLYLTRANSFERASE"/>
    <property type="match status" value="1"/>
</dbReference>
<dbReference type="PANTHER" id="PTHR11088:SF60">
    <property type="entry name" value="TRNA DIMETHYLALLYLTRANSFERASE"/>
    <property type="match status" value="1"/>
</dbReference>
<dbReference type="Pfam" id="PF01715">
    <property type="entry name" value="IPPT"/>
    <property type="match status" value="1"/>
</dbReference>
<dbReference type="SUPFAM" id="SSF52540">
    <property type="entry name" value="P-loop containing nucleoside triphosphate hydrolases"/>
    <property type="match status" value="1"/>
</dbReference>
<proteinExistence type="inferred from homology"/>
<gene>
    <name evidence="1" type="primary">miaA</name>
    <name type="ordered locus">Noca_3843</name>
</gene>
<feature type="chain" id="PRO_1000020628" description="tRNA dimethylallyltransferase">
    <location>
        <begin position="1"/>
        <end position="310"/>
    </location>
</feature>
<feature type="binding site" evidence="1">
    <location>
        <begin position="15"/>
        <end position="22"/>
    </location>
    <ligand>
        <name>ATP</name>
        <dbReference type="ChEBI" id="CHEBI:30616"/>
    </ligand>
</feature>
<feature type="binding site" evidence="1">
    <location>
        <begin position="17"/>
        <end position="22"/>
    </location>
    <ligand>
        <name>substrate</name>
    </ligand>
</feature>
<feature type="site" description="Interaction with substrate tRNA" evidence="1">
    <location>
        <position position="106"/>
    </location>
</feature>
<feature type="site" description="Interaction with substrate tRNA" evidence="1">
    <location>
        <position position="127"/>
    </location>
</feature>
<reference key="1">
    <citation type="submission" date="2006-12" db="EMBL/GenBank/DDBJ databases">
        <title>Complete sequence of chromosome 1 of Nocardioides sp. JS614.</title>
        <authorList>
            <person name="Copeland A."/>
            <person name="Lucas S."/>
            <person name="Lapidus A."/>
            <person name="Barry K."/>
            <person name="Detter J.C."/>
            <person name="Glavina del Rio T."/>
            <person name="Hammon N."/>
            <person name="Israni S."/>
            <person name="Dalin E."/>
            <person name="Tice H."/>
            <person name="Pitluck S."/>
            <person name="Thompson L.S."/>
            <person name="Brettin T."/>
            <person name="Bruce D."/>
            <person name="Han C."/>
            <person name="Tapia R."/>
            <person name="Schmutz J."/>
            <person name="Larimer F."/>
            <person name="Land M."/>
            <person name="Hauser L."/>
            <person name="Kyrpides N."/>
            <person name="Kim E."/>
            <person name="Mattes T."/>
            <person name="Gossett J."/>
            <person name="Richardson P."/>
        </authorList>
    </citation>
    <scope>NUCLEOTIDE SEQUENCE [LARGE SCALE GENOMIC DNA]</scope>
    <source>
        <strain>ATCC BAA-499 / JS614</strain>
    </source>
</reference>
<sequence length="310" mass="33993">MAPTPNRTPIVAVVGATASGKTGLSLDLAERLRGEIVNTDAMQVYRGMDIGTAKLPVAERRGIPHHLLDTLTVRDPATVAEFQSWARAEIAEIRGRGRTPVLVGGSALYTRAILDRFEFPGTDEAVRRRLEAELDALGPAALHERLRAVDPEAATRILVENGRRIVRALEVVEITGRPFTASLPTMEYADPRTVQVGVDIDRPTLDARIVARVDAMFAAGFVEEVERLLAEGLAEGRTAGRAIGYREVASYLTGELSLAEARERTVSATRRFSRRQDSWFRKDPRVTWIRYDDPGLVDRAVSVVAATLDG</sequence>
<protein>
    <recommendedName>
        <fullName evidence="1">tRNA dimethylallyltransferase</fullName>
        <ecNumber evidence="1">2.5.1.75</ecNumber>
    </recommendedName>
    <alternativeName>
        <fullName evidence="1">Dimethylallyl diphosphate:tRNA dimethylallyltransferase</fullName>
        <shortName evidence="1">DMAPP:tRNA dimethylallyltransferase</shortName>
        <shortName evidence="1">DMATase</shortName>
    </alternativeName>
    <alternativeName>
        <fullName evidence="1">Isopentenyl-diphosphate:tRNA isopentenyltransferase</fullName>
        <shortName evidence="1">IPP transferase</shortName>
        <shortName evidence="1">IPPT</shortName>
        <shortName evidence="1">IPTase</shortName>
    </alternativeName>
</protein>
<evidence type="ECO:0000255" key="1">
    <source>
        <dbReference type="HAMAP-Rule" id="MF_00185"/>
    </source>
</evidence>
<name>MIAA_NOCSJ</name>